<proteinExistence type="evidence at transcript level"/>
<sequence length="347" mass="38979">MPENIAFLTNSTDLGHVGRALGSSARPAWAIAVLASVLIFTTVVDVLGNLLVIISVFRNRKLRNAGNVFVVSLAFADLVVAFYPYPLVLYAIFHDGWSLGETQCKISGFLMGLSVIGSVFNITGIAINRYCYICHSFAYGRLYSFRNTLLLVALIWALTVLAILPNFFVGSLSYDPRVYSCTFTQTASSSYTVVVVVVHFLVPIAVVTFCYLRIWVLVIQVRRKVKSEERSRVRPSDLRNFVTMFVVFVLFAICWAPLNLIGLVVAINPEVMAPRVPEWLFVVSYFMAYFNSCLNAIIYGLLNRNFRKEYVRIMTAVWIPRRFVTETSRAATDGMRSKPSPAINNNE</sequence>
<keyword id="KW-0090">Biological rhythms</keyword>
<keyword id="KW-1003">Cell membrane</keyword>
<keyword id="KW-1015">Disulfide bond</keyword>
<keyword id="KW-0297">G-protein coupled receptor</keyword>
<keyword id="KW-0325">Glycoprotein</keyword>
<keyword id="KW-0472">Membrane</keyword>
<keyword id="KW-0675">Receptor</keyword>
<keyword id="KW-1185">Reference proteome</keyword>
<keyword id="KW-0807">Transducer</keyword>
<keyword id="KW-0812">Transmembrane</keyword>
<keyword id="KW-1133">Transmembrane helix</keyword>
<dbReference type="EMBL" id="BX897671">
    <property type="protein sequence ID" value="CAI11795.1"/>
    <property type="molecule type" value="Genomic_DNA"/>
</dbReference>
<dbReference type="EMBL" id="CR933018">
    <property type="protein sequence ID" value="CAM14076.1"/>
    <property type="molecule type" value="Genomic_DNA"/>
</dbReference>
<dbReference type="EMBL" id="AY166826">
    <property type="protein sequence ID" value="AAO23297.1"/>
    <property type="molecule type" value="mRNA"/>
</dbReference>
<dbReference type="EMBL" id="U31824">
    <property type="protein sequence ID" value="AAA92496.1"/>
    <property type="molecule type" value="mRNA"/>
</dbReference>
<dbReference type="RefSeq" id="NP_571469.1">
    <property type="nucleotide sequence ID" value="NM_131394.1"/>
</dbReference>
<dbReference type="SMR" id="P51049"/>
<dbReference type="FunCoup" id="P51049">
    <property type="interactions" value="62"/>
</dbReference>
<dbReference type="STRING" id="7955.ENSDARP00000072688"/>
<dbReference type="GlyCosmos" id="P51049">
    <property type="glycosylation" value="1 site, No reported glycans"/>
</dbReference>
<dbReference type="PaxDb" id="7955-ENSDARP00000072688"/>
<dbReference type="Ensembl" id="ENSDART00000078226">
    <property type="protein sequence ID" value="ENSDARP00000072688"/>
    <property type="gene ID" value="ENSDARG00000086493"/>
</dbReference>
<dbReference type="Ensembl" id="ENSDART00000181941">
    <property type="protein sequence ID" value="ENSDARP00000147236"/>
    <property type="gene ID" value="ENSDARG00000086493"/>
</dbReference>
<dbReference type="GeneID" id="30668"/>
<dbReference type="KEGG" id="dre:30668"/>
<dbReference type="AGR" id="ZFIN:ZDB-GENE-990415-156"/>
<dbReference type="CTD" id="30668"/>
<dbReference type="ZFIN" id="ZDB-GENE-990415-156">
    <property type="gene designation" value="mtnr1bb"/>
</dbReference>
<dbReference type="eggNOG" id="KOG3656">
    <property type="taxonomic scope" value="Eukaryota"/>
</dbReference>
<dbReference type="HOGENOM" id="CLU_009579_3_3_1"/>
<dbReference type="InParanoid" id="P51049"/>
<dbReference type="OMA" id="WHTPLYI"/>
<dbReference type="OrthoDB" id="10044919at2759"/>
<dbReference type="PhylomeDB" id="P51049"/>
<dbReference type="TreeFam" id="TF331693"/>
<dbReference type="Reactome" id="R-DRE-373076">
    <property type="pathway name" value="Class A/1 (Rhodopsin-like receptors)"/>
</dbReference>
<dbReference type="Reactome" id="R-DRE-418594">
    <property type="pathway name" value="G alpha (i) signalling events"/>
</dbReference>
<dbReference type="PRO" id="PR:P51049"/>
<dbReference type="Proteomes" id="UP000000437">
    <property type="component" value="Chromosome 10"/>
</dbReference>
<dbReference type="Bgee" id="ENSDARG00000086493">
    <property type="expression patterns" value="Expressed in dorsal caudal thalamic nucleus and 7 other cell types or tissues"/>
</dbReference>
<dbReference type="GO" id="GO:0005886">
    <property type="term" value="C:plasma membrane"/>
    <property type="evidence" value="ECO:0000318"/>
    <property type="project" value="GO_Central"/>
</dbReference>
<dbReference type="GO" id="GO:0004930">
    <property type="term" value="F:G protein-coupled receptor activity"/>
    <property type="evidence" value="ECO:0000318"/>
    <property type="project" value="GO_Central"/>
</dbReference>
<dbReference type="GO" id="GO:0008502">
    <property type="term" value="F:melatonin receptor activity"/>
    <property type="evidence" value="ECO:0007669"/>
    <property type="project" value="InterPro"/>
</dbReference>
<dbReference type="GO" id="GO:0007186">
    <property type="term" value="P:G protein-coupled receptor signaling pathway"/>
    <property type="evidence" value="ECO:0000318"/>
    <property type="project" value="GO_Central"/>
</dbReference>
<dbReference type="GO" id="GO:0048511">
    <property type="term" value="P:rhythmic process"/>
    <property type="evidence" value="ECO:0007669"/>
    <property type="project" value="UniProtKB-KW"/>
</dbReference>
<dbReference type="FunFam" id="1.20.1070.10:FF:000056">
    <property type="entry name" value="Melatonin receptor type 1A"/>
    <property type="match status" value="1"/>
</dbReference>
<dbReference type="Gene3D" id="1.20.1070.10">
    <property type="entry name" value="Rhodopsin 7-helix transmembrane proteins"/>
    <property type="match status" value="1"/>
</dbReference>
<dbReference type="InterPro" id="IPR000276">
    <property type="entry name" value="GPCR_Rhodpsn"/>
</dbReference>
<dbReference type="InterPro" id="IPR017452">
    <property type="entry name" value="GPCR_Rhodpsn_7TM"/>
</dbReference>
<dbReference type="InterPro" id="IPR002278">
    <property type="entry name" value="Mel_1A/1B_rcpt"/>
</dbReference>
<dbReference type="InterPro" id="IPR000025">
    <property type="entry name" value="Melatonin_rcpt"/>
</dbReference>
<dbReference type="PANTHER" id="PTHR24228">
    <property type="entry name" value="B2 BRADYKININ RECEPTOR/ANGIOTENSIN II RECEPTOR"/>
    <property type="match status" value="1"/>
</dbReference>
<dbReference type="PANTHER" id="PTHR24228:SF54">
    <property type="entry name" value="MELATONIN RECEPTOR TYPE 1B"/>
    <property type="match status" value="1"/>
</dbReference>
<dbReference type="Pfam" id="PF00001">
    <property type="entry name" value="7tm_1"/>
    <property type="match status" value="1"/>
</dbReference>
<dbReference type="PRINTS" id="PR00237">
    <property type="entry name" value="GPCRRHODOPSN"/>
</dbReference>
<dbReference type="PRINTS" id="PR01149">
    <property type="entry name" value="MELATONIN1AR"/>
</dbReference>
<dbReference type="PRINTS" id="PR00857">
    <property type="entry name" value="MELATONINR"/>
</dbReference>
<dbReference type="SMART" id="SM01381">
    <property type="entry name" value="7TM_GPCR_Srsx"/>
    <property type="match status" value="1"/>
</dbReference>
<dbReference type="SUPFAM" id="SSF81321">
    <property type="entry name" value="Family A G protein-coupled receptor-like"/>
    <property type="match status" value="1"/>
</dbReference>
<dbReference type="PROSITE" id="PS00237">
    <property type="entry name" value="G_PROTEIN_RECEP_F1_1"/>
    <property type="match status" value="1"/>
</dbReference>
<dbReference type="PROSITE" id="PS50262">
    <property type="entry name" value="G_PROTEIN_RECEP_F1_2"/>
    <property type="match status" value="1"/>
</dbReference>
<feature type="chain" id="PRO_0000069745" description="Melatonin receptor type 1B-B">
    <location>
        <begin position="1"/>
        <end position="347"/>
    </location>
</feature>
<feature type="topological domain" description="Extracellular" evidence="2">
    <location>
        <begin position="1"/>
        <end position="36"/>
    </location>
</feature>
<feature type="transmembrane region" description="Helical; Name=1" evidence="2">
    <location>
        <begin position="37"/>
        <end position="57"/>
    </location>
</feature>
<feature type="topological domain" description="Cytoplasmic" evidence="2">
    <location>
        <begin position="58"/>
        <end position="72"/>
    </location>
</feature>
<feature type="transmembrane region" description="Helical; Name=2" evidence="2">
    <location>
        <begin position="73"/>
        <end position="93"/>
    </location>
</feature>
<feature type="topological domain" description="Extracellular" evidence="2">
    <location>
        <begin position="94"/>
        <end position="105"/>
    </location>
</feature>
<feature type="transmembrane region" description="Helical; Name=3" evidence="2">
    <location>
        <begin position="106"/>
        <end position="126"/>
    </location>
</feature>
<feature type="topological domain" description="Cytoplasmic" evidence="2">
    <location>
        <begin position="127"/>
        <end position="148"/>
    </location>
</feature>
<feature type="transmembrane region" description="Helical; Name=4" evidence="2">
    <location>
        <begin position="149"/>
        <end position="169"/>
    </location>
</feature>
<feature type="topological domain" description="Extracellular" evidence="2">
    <location>
        <begin position="170"/>
        <end position="191"/>
    </location>
</feature>
<feature type="transmembrane region" description="Helical; Name=5" evidence="2">
    <location>
        <begin position="192"/>
        <end position="212"/>
    </location>
</feature>
<feature type="topological domain" description="Cytoplasmic" evidence="2">
    <location>
        <begin position="213"/>
        <end position="244"/>
    </location>
</feature>
<feature type="transmembrane region" description="Helical; Name=6" evidence="2">
    <location>
        <begin position="245"/>
        <end position="265"/>
    </location>
</feature>
<feature type="topological domain" description="Extracellular" evidence="2">
    <location>
        <begin position="266"/>
        <end position="278"/>
    </location>
</feature>
<feature type="transmembrane region" description="Helical; Name=7" evidence="2">
    <location>
        <begin position="279"/>
        <end position="299"/>
    </location>
</feature>
<feature type="topological domain" description="Cytoplasmic" evidence="2">
    <location>
        <begin position="300"/>
        <end position="347"/>
    </location>
</feature>
<feature type="glycosylation site" description="N-linked (GlcNAc...) asparagine" evidence="2">
    <location>
        <position position="10"/>
    </location>
</feature>
<feature type="disulfide bond" evidence="3">
    <location>
        <begin position="104"/>
        <end position="181"/>
    </location>
</feature>
<feature type="sequence conflict" description="In Ref. 2; AAO23297." evidence="5" ref="2">
    <original>A</original>
    <variation>P</variation>
    <location>
        <position position="25"/>
    </location>
</feature>
<feature type="sequence conflict" description="In Ref. 2; AAO23297." evidence="5" ref="2">
    <original>R</original>
    <variation>K</variation>
    <location>
        <position position="63"/>
    </location>
</feature>
<feature type="sequence conflict" description="In Ref. 3; AAA92496." evidence="5" ref="3">
    <original>Y</original>
    <variation>C</variation>
    <location>
        <position position="143"/>
    </location>
</feature>
<evidence type="ECO:0000250" key="1"/>
<evidence type="ECO:0000255" key="2"/>
<evidence type="ECO:0000255" key="3">
    <source>
        <dbReference type="PROSITE-ProRule" id="PRU00521"/>
    </source>
</evidence>
<evidence type="ECO:0000269" key="4">
    <source>
    </source>
</evidence>
<evidence type="ECO:0000305" key="5"/>
<name>MR1BB_DANRE</name>
<protein>
    <recommendedName>
        <fullName>Melatonin receptor type 1B-B</fullName>
        <shortName>Mel-1B-R-B</shortName>
        <shortName>Mel1b receptor B</shortName>
    </recommendedName>
    <alternativeName>
        <fullName>Melatonin receptor Mel1b Z2.6-4</fullName>
    </alternativeName>
    <alternativeName>
        <fullName>zMel1b-1</fullName>
    </alternativeName>
</protein>
<accession>P51049</accession>
<accession>Q5RGH4</accession>
<accession>Q804I8</accession>
<reference key="1">
    <citation type="journal article" date="2013" name="Nature">
        <title>The zebrafish reference genome sequence and its relationship to the human genome.</title>
        <authorList>
            <person name="Howe K."/>
            <person name="Clark M.D."/>
            <person name="Torroja C.F."/>
            <person name="Torrance J."/>
            <person name="Berthelot C."/>
            <person name="Muffato M."/>
            <person name="Collins J.E."/>
            <person name="Humphray S."/>
            <person name="McLaren K."/>
            <person name="Matthews L."/>
            <person name="McLaren S."/>
            <person name="Sealy I."/>
            <person name="Caccamo M."/>
            <person name="Churcher C."/>
            <person name="Scott C."/>
            <person name="Barrett J.C."/>
            <person name="Koch R."/>
            <person name="Rauch G.J."/>
            <person name="White S."/>
            <person name="Chow W."/>
            <person name="Kilian B."/>
            <person name="Quintais L.T."/>
            <person name="Guerra-Assuncao J.A."/>
            <person name="Zhou Y."/>
            <person name="Gu Y."/>
            <person name="Yen J."/>
            <person name="Vogel J.H."/>
            <person name="Eyre T."/>
            <person name="Redmond S."/>
            <person name="Banerjee R."/>
            <person name="Chi J."/>
            <person name="Fu B."/>
            <person name="Langley E."/>
            <person name="Maguire S.F."/>
            <person name="Laird G.K."/>
            <person name="Lloyd D."/>
            <person name="Kenyon E."/>
            <person name="Donaldson S."/>
            <person name="Sehra H."/>
            <person name="Almeida-King J."/>
            <person name="Loveland J."/>
            <person name="Trevanion S."/>
            <person name="Jones M."/>
            <person name="Quail M."/>
            <person name="Willey D."/>
            <person name="Hunt A."/>
            <person name="Burton J."/>
            <person name="Sims S."/>
            <person name="McLay K."/>
            <person name="Plumb B."/>
            <person name="Davis J."/>
            <person name="Clee C."/>
            <person name="Oliver K."/>
            <person name="Clark R."/>
            <person name="Riddle C."/>
            <person name="Elliot D."/>
            <person name="Threadgold G."/>
            <person name="Harden G."/>
            <person name="Ware D."/>
            <person name="Begum S."/>
            <person name="Mortimore B."/>
            <person name="Kerry G."/>
            <person name="Heath P."/>
            <person name="Phillimore B."/>
            <person name="Tracey A."/>
            <person name="Corby N."/>
            <person name="Dunn M."/>
            <person name="Johnson C."/>
            <person name="Wood J."/>
            <person name="Clark S."/>
            <person name="Pelan S."/>
            <person name="Griffiths G."/>
            <person name="Smith M."/>
            <person name="Glithero R."/>
            <person name="Howden P."/>
            <person name="Barker N."/>
            <person name="Lloyd C."/>
            <person name="Stevens C."/>
            <person name="Harley J."/>
            <person name="Holt K."/>
            <person name="Panagiotidis G."/>
            <person name="Lovell J."/>
            <person name="Beasley H."/>
            <person name="Henderson C."/>
            <person name="Gordon D."/>
            <person name="Auger K."/>
            <person name="Wright D."/>
            <person name="Collins J."/>
            <person name="Raisen C."/>
            <person name="Dyer L."/>
            <person name="Leung K."/>
            <person name="Robertson L."/>
            <person name="Ambridge K."/>
            <person name="Leongamornlert D."/>
            <person name="McGuire S."/>
            <person name="Gilderthorp R."/>
            <person name="Griffiths C."/>
            <person name="Manthravadi D."/>
            <person name="Nichol S."/>
            <person name="Barker G."/>
            <person name="Whitehead S."/>
            <person name="Kay M."/>
            <person name="Brown J."/>
            <person name="Murnane C."/>
            <person name="Gray E."/>
            <person name="Humphries M."/>
            <person name="Sycamore N."/>
            <person name="Barker D."/>
            <person name="Saunders D."/>
            <person name="Wallis J."/>
            <person name="Babbage A."/>
            <person name="Hammond S."/>
            <person name="Mashreghi-Mohammadi M."/>
            <person name="Barr L."/>
            <person name="Martin S."/>
            <person name="Wray P."/>
            <person name="Ellington A."/>
            <person name="Matthews N."/>
            <person name="Ellwood M."/>
            <person name="Woodmansey R."/>
            <person name="Clark G."/>
            <person name="Cooper J."/>
            <person name="Tromans A."/>
            <person name="Grafham D."/>
            <person name="Skuce C."/>
            <person name="Pandian R."/>
            <person name="Andrews R."/>
            <person name="Harrison E."/>
            <person name="Kimberley A."/>
            <person name="Garnett J."/>
            <person name="Fosker N."/>
            <person name="Hall R."/>
            <person name="Garner P."/>
            <person name="Kelly D."/>
            <person name="Bird C."/>
            <person name="Palmer S."/>
            <person name="Gehring I."/>
            <person name="Berger A."/>
            <person name="Dooley C.M."/>
            <person name="Ersan-Urun Z."/>
            <person name="Eser C."/>
            <person name="Geiger H."/>
            <person name="Geisler M."/>
            <person name="Karotki L."/>
            <person name="Kirn A."/>
            <person name="Konantz J."/>
            <person name="Konantz M."/>
            <person name="Oberlander M."/>
            <person name="Rudolph-Geiger S."/>
            <person name="Teucke M."/>
            <person name="Lanz C."/>
            <person name="Raddatz G."/>
            <person name="Osoegawa K."/>
            <person name="Zhu B."/>
            <person name="Rapp A."/>
            <person name="Widaa S."/>
            <person name="Langford C."/>
            <person name="Yang F."/>
            <person name="Schuster S.C."/>
            <person name="Carter N.P."/>
            <person name="Harrow J."/>
            <person name="Ning Z."/>
            <person name="Herrero J."/>
            <person name="Searle S.M."/>
            <person name="Enright A."/>
            <person name="Geisler R."/>
            <person name="Plasterk R.H."/>
            <person name="Lee C."/>
            <person name="Westerfield M."/>
            <person name="de Jong P.J."/>
            <person name="Zon L.I."/>
            <person name="Postlethwait J.H."/>
            <person name="Nusslein-Volhard C."/>
            <person name="Hubbard T.J."/>
            <person name="Roest Crollius H."/>
            <person name="Rogers J."/>
            <person name="Stemple D.L."/>
        </authorList>
    </citation>
    <scope>NUCLEOTIDE SEQUENCE [LARGE SCALE GENOMIC DNA]</scope>
    <source>
        <strain>Tuebingen</strain>
    </source>
</reference>
<reference key="2">
    <citation type="submission" date="2002-10" db="EMBL/GenBank/DDBJ databases">
        <title>Zebrafish melatonin receptors.</title>
        <authorList>
            <person name="Danilova N.P."/>
        </authorList>
    </citation>
    <scope>NUCLEOTIDE SEQUENCE [MRNA] OF 1-233</scope>
</reference>
<reference key="3">
    <citation type="journal article" date="1995" name="Neuron">
        <title>Melatonin receptors are for the birds: molecular analysis of two receptor subtypes differentially expressed in chick brain.</title>
        <authorList>
            <person name="Reppert S.M."/>
            <person name="Weaver D.R."/>
            <person name="Cassone V.M."/>
            <person name="Godson C."/>
            <person name="Kolakowski L.F. Jr."/>
        </authorList>
    </citation>
    <scope>NUCLEOTIDE SEQUENCE [MRNA] OF 134-286</scope>
</reference>
<reference key="4">
    <citation type="journal article" date="2007" name="PLoS ONE">
        <title>The circadian system is a target and modulator of prenatal cocaine effects.</title>
        <authorList>
            <person name="Shang E.H."/>
            <person name="Zhdanova I.V."/>
        </authorList>
    </citation>
    <scope>INDUCTION</scope>
</reference>
<gene>
    <name type="primary">mtnr1bb</name>
    <name type="synonym">mel1br</name>
    <name type="synonym">mtnr1br</name>
    <name type="synonym">mtnr1br-2</name>
    <name type="ORF">si:ch211-214k5.4</name>
    <name type="ORF">si:ch211-224h1.2</name>
</gene>
<organism>
    <name type="scientific">Danio rerio</name>
    <name type="common">Zebrafish</name>
    <name type="synonym">Brachydanio rerio</name>
    <dbReference type="NCBI Taxonomy" id="7955"/>
    <lineage>
        <taxon>Eukaryota</taxon>
        <taxon>Metazoa</taxon>
        <taxon>Chordata</taxon>
        <taxon>Craniata</taxon>
        <taxon>Vertebrata</taxon>
        <taxon>Euteleostomi</taxon>
        <taxon>Actinopterygii</taxon>
        <taxon>Neopterygii</taxon>
        <taxon>Teleostei</taxon>
        <taxon>Ostariophysi</taxon>
        <taxon>Cypriniformes</taxon>
        <taxon>Danionidae</taxon>
        <taxon>Danioninae</taxon>
        <taxon>Danio</taxon>
    </lineage>
</organism>
<comment type="function">
    <text evidence="1">High affinity receptor for melatonin. The activity of this receptor is mediated by pertussis toxin sensitive G proteins that inhibits adenylate cyclase activity (By similarity).</text>
</comment>
<comment type="subcellular location">
    <subcellularLocation>
        <location>Cell membrane</location>
        <topology>Multi-pass membrane protein</topology>
    </subcellularLocation>
</comment>
<comment type="induction">
    <text evidence="4">By cocaine, which increases the levels of day-time expression.</text>
</comment>
<comment type="similarity">
    <text evidence="3">Belongs to the G-protein coupled receptor 1 family.</text>
</comment>